<comment type="function">
    <molecule>Protein 2A</molecule>
    <text evidence="1">Implicated in RNA2 replication. Could also be required for nematode transmission of the virus (By similarity).</text>
</comment>
<comment type="function">
    <molecule>Movement protein</molecule>
    <text evidence="1">Transports viral genome to neighboring plant cells directly through plasmosdesmata, without any budding. The movement protein allows efficient cell to cell propagation, by bypassing the host cell wall barrier. Acts by forming a tubular structure at the host plasmodesmata, enlarging it enough to allow free passage of virion capsids (By similarity).</text>
</comment>
<comment type="subcellular location">
    <molecule>Movement protein</molecule>
    <subcellularLocation>
        <location evidence="1">Host cell junction</location>
        <location evidence="1">Host plasmodesma</location>
    </subcellularLocation>
    <text evidence="1">Assembles in tubules that are embedded within modified plasmodesmata.</text>
</comment>
<comment type="subcellular location">
    <molecule>Coat protein</molecule>
    <subcellularLocation>
        <location evidence="4">Virion</location>
    </subcellularLocation>
</comment>
<comment type="PTM">
    <text evidence="1">Specific enzymatic cleavages in vivo by the P1 encoded 3C-like protease yield mature proteins.</text>
</comment>
<comment type="miscellaneous">
    <text>Virions are comprised of 60 copies of the coat protein.</text>
</comment>
<comment type="similarity">
    <text evidence="4">Belongs to the nepoviruses RNA2 polyprotein family.</text>
</comment>
<accession>Q8QVU9</accession>
<keyword id="KW-0167">Capsid protein</keyword>
<keyword id="KW-0903">Direct protein sequencing</keyword>
<keyword id="KW-1031">Host cell junction</keyword>
<keyword id="KW-0813">Transport</keyword>
<keyword id="KW-0916">Viral movement protein</keyword>
<keyword id="KW-0946">Virion</keyword>
<dbReference type="EMBL" id="AB073148">
    <property type="protein sequence ID" value="BAB89370.2"/>
    <property type="molecule type" value="Genomic_RNA"/>
</dbReference>
<dbReference type="RefSeq" id="NP_620620.2">
    <property type="nucleotide sequence ID" value="NC_003792.2"/>
</dbReference>
<dbReference type="SMR" id="Q8QVU9"/>
<dbReference type="GeneID" id="988024"/>
<dbReference type="KEGG" id="vg:988024"/>
<dbReference type="Proteomes" id="UP000008564">
    <property type="component" value="Genome"/>
</dbReference>
<dbReference type="GO" id="GO:0044219">
    <property type="term" value="C:host cell plasmodesma"/>
    <property type="evidence" value="ECO:0007669"/>
    <property type="project" value="UniProtKB-SubCell"/>
</dbReference>
<dbReference type="GO" id="GO:0019028">
    <property type="term" value="C:viral capsid"/>
    <property type="evidence" value="ECO:0007669"/>
    <property type="project" value="UniProtKB-KW"/>
</dbReference>
<dbReference type="GO" id="GO:0005198">
    <property type="term" value="F:structural molecule activity"/>
    <property type="evidence" value="ECO:0007669"/>
    <property type="project" value="InterPro"/>
</dbReference>
<dbReference type="GO" id="GO:0046740">
    <property type="term" value="P:transport of virus in host, cell to cell"/>
    <property type="evidence" value="ECO:0007669"/>
    <property type="project" value="UniProtKB-KW"/>
</dbReference>
<dbReference type="Gene3D" id="2.60.120.20">
    <property type="match status" value="2"/>
</dbReference>
<dbReference type="InterPro" id="IPR005054">
    <property type="entry name" value="Nepo_coat"/>
</dbReference>
<dbReference type="InterPro" id="IPR005305">
    <property type="entry name" value="Nepo_coat_C"/>
</dbReference>
<dbReference type="InterPro" id="IPR005306">
    <property type="entry name" value="Nepo_coat_N"/>
</dbReference>
<dbReference type="InterPro" id="IPR029053">
    <property type="entry name" value="Viral_coat"/>
</dbReference>
<dbReference type="Pfam" id="PF03391">
    <property type="entry name" value="Nepo_coat"/>
    <property type="match status" value="1"/>
</dbReference>
<dbReference type="Pfam" id="PF03688">
    <property type="entry name" value="Nepo_coat_C"/>
    <property type="match status" value="1"/>
</dbReference>
<dbReference type="Pfam" id="PF03689">
    <property type="entry name" value="Nepo_coat_N"/>
    <property type="match status" value="1"/>
</dbReference>
<dbReference type="SUPFAM" id="SSF88633">
    <property type="entry name" value="Positive stranded ssRNA viruses"/>
    <property type="match status" value="3"/>
</dbReference>
<organism>
    <name type="scientific">Cycas necrotic stunt virus</name>
    <name type="common">CNSV</name>
    <dbReference type="NCBI Taxonomy" id="173976"/>
    <lineage>
        <taxon>Viruses</taxon>
        <taxon>Riboviria</taxon>
        <taxon>Orthornavirae</taxon>
        <taxon>Pisuviricota</taxon>
        <taxon>Pisoniviricetes</taxon>
        <taxon>Picornavirales</taxon>
        <taxon>Secoviridae</taxon>
        <taxon>Comovirinae</taxon>
        <taxon>Nepovirus</taxon>
        <taxon>Nepovirus cycas</taxon>
    </lineage>
</organism>
<name>POL2_CNSV</name>
<sequence length="1240" mass="138745">MFAPIGAPGMGERASQNFRSASGFRDLLVHAVKVLVLSAYQRRPCTSMLRPREQKRIKMRLKWMCLMKFCFMQNNYWDTQRRFTGGMHNVPELATFDAWLQHWRVVHWRLNIISEILIDFQALVRMMKNLAGQCHFDFYPVCTHCVQLVNNWYIAEFKPHLEEETEWWKDLVKPRMGNPVHEIEPNRKSQYVESRRIPPPLNGDEFANFLHVCQCAKLAFDVERAATEENFEDALDTLEEDFYDIDSTIPKRDLLAADARVVKRAFTLRRKRRPNRTSVYSMKGQPPVTFSASDLVSCLGQVLSTLPTVKMDREAIEDQQDHLEDKQGGEILTTPQFIEVLRKKKREVREKEFDDSTQGKLLPAEDFTLSKHDVFLANSVLDGLRKSKLIQRFAGKCATSTKITVDLTNKEEVVRYGPKELASEGFRQTFNVLNRPEYNALNKLAEAGWKEAKSVVLNLHIRSYLPQQMNAYAFCVIMWGHSSDAQEAALSGSYVYLGDGEATMLQLPLLCEYVGHNLQDFEAYKRSLVLSTVFPEFSGIADGKAMFGITSIEFTEYLPTSHAGITHERDSWDAMLRNHTEEKRRFLAGFNVVDTIEKGNRKGFSFPDFDLKAVPRHQAVVRTFEDQDVAPILSKAKSMRVKTFGSFRAGNIPVNFLGTPSNGQVASKHSVSENAGYSVGDMKSAENFVFTQLITVPAASTKGNVLAGVDILANARTTMSGFYMRWLQKGYIDTNLKLICHLPRAPFAGMSFFVLIDGTGYLAKDAPTSLNEEEILSYPLHLVTTSDVSSYEFVLDWHRYIGQVPFAEENAFLRPTLFLVACVSSTLALSAKVEFYLEAQSVGEELPRTLAPSPVLSYPFQNSFLEDLDLFLPPKRLTLGERETTIIPLSFAKSKKSGDAVLYSHAAARLAHFQGIGGVLHGVVYLVGSQLVASQSRISMWSKEQHIQHQAVNVHVDTDTGVAFDLPIKDAFYASSVYGDSGAVIQVTCLCSPMSPNAIKAPFDMIFKIRGFTPDAPMCRTINFTQRFGWFAVEPTTSTGAIKLKIWPVSNHLESEDMKVTGYTNAFLQMCQTSTMHFGSVIIHFSWTLFGGTTNAATAGGVVTIAEGFGPEEENFRGHCRNLSIYEGRATVPLELGTFAGPTPLKKLDFKYRNWIRFTTPKGRNISSIFCAIEVLPGFSFYGRTGSPRLSVVGTTVPPTADASTSNSQGGDEDIGDQYSAALGRGRGRGSRPGPSPIRG</sequence>
<organismHost>
    <name type="scientific">Aucuba japonica</name>
    <name type="common">Japanese laurel</name>
    <name type="synonym">Spotted laurel</name>
    <dbReference type="NCBI Taxonomy" id="16901"/>
</organismHost>
<organismHost>
    <name type="scientific">Cycas revoluta</name>
    <name type="common">Sago palm</name>
    <dbReference type="NCBI Taxonomy" id="3396"/>
</organismHost>
<organismHost>
    <name type="scientific">Gladiolus</name>
    <dbReference type="NCBI Taxonomy" id="49747"/>
</organismHost>
<protein>
    <recommendedName>
        <fullName>RNA2 polyprotein</fullName>
    </recommendedName>
    <alternativeName>
        <fullName>P2</fullName>
    </alternativeName>
    <component>
        <recommendedName>
            <fullName>Protein 2A</fullName>
            <shortName>P2A</shortName>
        </recommendedName>
    </component>
    <component>
        <recommendedName>
            <fullName>Movement protein</fullName>
        </recommendedName>
        <alternativeName>
            <fullName>2B-MP</fullName>
        </alternativeName>
    </component>
    <component>
        <recommendedName>
            <fullName>Coat protein</fullName>
        </recommendedName>
        <alternativeName>
            <fullName>2C-CP</fullName>
        </alternativeName>
    </component>
</protein>
<evidence type="ECO:0000250" key="1"/>
<evidence type="ECO:0000255" key="2"/>
<evidence type="ECO:0000256" key="3">
    <source>
        <dbReference type="SAM" id="MobiDB-lite"/>
    </source>
</evidence>
<evidence type="ECO:0000305" key="4"/>
<reference key="1">
    <citation type="journal article" date="2002" name="Arch. Virol.">
        <title>Nucleotide sequence and taxonomy of Cycas necrotic stunt virus.</title>
        <authorList>
            <person name="Han S.S."/>
            <person name="Karasev A.V."/>
            <person name="Ieki H."/>
            <person name="Iwanami T."/>
        </authorList>
    </citation>
    <scope>NUCLEOTIDE SEQUENCE [GENOMIC RNA]</scope>
    <scope>PROTEIN SEQUENCE OF 684-695</scope>
</reference>
<feature type="chain" id="PRO_0000037118" description="Protein 2A" evidence="2">
    <location>
        <begin position="1"/>
        <end position="314" status="uncertain"/>
    </location>
</feature>
<feature type="chain" id="PRO_0000037119" description="Movement protein" evidence="2">
    <location>
        <begin position="315" status="uncertain"/>
        <end position="683"/>
    </location>
</feature>
<feature type="chain" id="PRO_0000037120" description="Coat protein">
    <location>
        <begin position="684"/>
        <end position="1240"/>
    </location>
</feature>
<feature type="region of interest" description="Disordered" evidence="3">
    <location>
        <begin position="1193"/>
        <end position="1240"/>
    </location>
</feature>
<feature type="compositionally biased region" description="Polar residues" evidence="3">
    <location>
        <begin position="1193"/>
        <end position="1210"/>
    </location>
</feature>
<proteinExistence type="evidence at protein level"/>